<organism>
    <name type="scientific">Bos taurus</name>
    <name type="common">Bovine</name>
    <dbReference type="NCBI Taxonomy" id="9913"/>
    <lineage>
        <taxon>Eukaryota</taxon>
        <taxon>Metazoa</taxon>
        <taxon>Chordata</taxon>
        <taxon>Craniata</taxon>
        <taxon>Vertebrata</taxon>
        <taxon>Euteleostomi</taxon>
        <taxon>Mammalia</taxon>
        <taxon>Eutheria</taxon>
        <taxon>Laurasiatheria</taxon>
        <taxon>Artiodactyla</taxon>
        <taxon>Ruminantia</taxon>
        <taxon>Pecora</taxon>
        <taxon>Bovidae</taxon>
        <taxon>Bovinae</taxon>
        <taxon>Bos</taxon>
    </lineage>
</organism>
<protein>
    <recommendedName>
        <fullName>Neuroendocrine convertase 1</fullName>
        <shortName>NEC 1</shortName>
        <ecNumber>3.4.21.93</ecNumber>
    </recommendedName>
    <alternativeName>
        <fullName>Prohormone convertase 1</fullName>
    </alternativeName>
    <alternativeName>
        <fullName>Proprotein convertase 1</fullName>
        <shortName>PC1</shortName>
    </alternativeName>
</protein>
<gene>
    <name type="primary">PCSK1</name>
</gene>
<evidence type="ECO:0000250" key="1"/>
<evidence type="ECO:0000250" key="2">
    <source>
        <dbReference type="UniProtKB" id="P63239"/>
    </source>
</evidence>
<evidence type="ECO:0000255" key="3"/>
<evidence type="ECO:0000255" key="4">
    <source>
        <dbReference type="PROSITE-ProRule" id="PRU01173"/>
    </source>
</evidence>
<evidence type="ECO:0000255" key="5">
    <source>
        <dbReference type="PROSITE-ProRule" id="PRU01240"/>
    </source>
</evidence>
<evidence type="ECO:0000256" key="6">
    <source>
        <dbReference type="SAM" id="MobiDB-lite"/>
    </source>
</evidence>
<evidence type="ECO:0000305" key="7"/>
<name>NEC1_BOVIN</name>
<comment type="function">
    <text evidence="2">Involved in the processing of hormone and other protein precursors at sites comprised of pairs of basic amino acid residues. Substrates include POMC, renin, enkephalin, dynorphin, somatostatin, insulin and AGRP.</text>
</comment>
<comment type="catalytic activity">
    <reaction>
        <text>Release of protein hormones, neuropeptides and renin from their precursors, generally by hydrolysis of -Lys-Arg-|- bonds.</text>
        <dbReference type="EC" id="3.4.21.93"/>
    </reaction>
</comment>
<comment type="cofactor">
    <cofactor evidence="1">
        <name>Ca(2+)</name>
        <dbReference type="ChEBI" id="CHEBI:29108"/>
    </cofactor>
</comment>
<comment type="subcellular location">
    <subcellularLocation>
        <location evidence="1">Cytoplasmic vesicle</location>
        <location evidence="1">Secretory vesicle</location>
    </subcellularLocation>
    <text evidence="1">Localized in the secretion granules.</text>
</comment>
<comment type="similarity">
    <text evidence="7">Belongs to the peptidase S8 family. Furin subfamily.</text>
</comment>
<keyword id="KW-0106">Calcium</keyword>
<keyword id="KW-0165">Cleavage on pair of basic residues</keyword>
<keyword id="KW-0968">Cytoplasmic vesicle</keyword>
<keyword id="KW-1015">Disulfide bond</keyword>
<keyword id="KW-0325">Glycoprotein</keyword>
<keyword id="KW-0378">Hydrolase</keyword>
<keyword id="KW-0645">Protease</keyword>
<keyword id="KW-1185">Reference proteome</keyword>
<keyword id="KW-0720">Serine protease</keyword>
<keyword id="KW-0732">Signal</keyword>
<keyword id="KW-0865">Zymogen</keyword>
<dbReference type="EC" id="3.4.21.93"/>
<dbReference type="EMBL" id="AF186405">
    <property type="protein sequence ID" value="AAG17017.1"/>
    <property type="molecule type" value="mRNA"/>
</dbReference>
<dbReference type="RefSeq" id="NP_776837.1">
    <property type="nucleotide sequence ID" value="NM_174412.2"/>
</dbReference>
<dbReference type="SMR" id="Q9GLR1"/>
<dbReference type="FunCoup" id="Q9GLR1">
    <property type="interactions" value="327"/>
</dbReference>
<dbReference type="STRING" id="9913.ENSBTAP00000027775"/>
<dbReference type="MEROPS" id="S08.072"/>
<dbReference type="GlyCosmos" id="Q9GLR1">
    <property type="glycosylation" value="2 sites, No reported glycans"/>
</dbReference>
<dbReference type="GlyGen" id="Q9GLR1">
    <property type="glycosylation" value="2 sites"/>
</dbReference>
<dbReference type="PaxDb" id="9913-ENSBTAP00000027775"/>
<dbReference type="GeneID" id="281967"/>
<dbReference type="KEGG" id="bta:281967"/>
<dbReference type="CTD" id="5122"/>
<dbReference type="eggNOG" id="KOG3525">
    <property type="taxonomic scope" value="Eukaryota"/>
</dbReference>
<dbReference type="InParanoid" id="Q9GLR1"/>
<dbReference type="OrthoDB" id="300641at2759"/>
<dbReference type="Proteomes" id="UP000009136">
    <property type="component" value="Unplaced"/>
</dbReference>
<dbReference type="GO" id="GO:0005615">
    <property type="term" value="C:extracellular space"/>
    <property type="evidence" value="ECO:0000318"/>
    <property type="project" value="GO_Central"/>
</dbReference>
<dbReference type="GO" id="GO:0016020">
    <property type="term" value="C:membrane"/>
    <property type="evidence" value="ECO:0000318"/>
    <property type="project" value="GO_Central"/>
</dbReference>
<dbReference type="GO" id="GO:0043005">
    <property type="term" value="C:neuron projection"/>
    <property type="evidence" value="ECO:0000318"/>
    <property type="project" value="GO_Central"/>
</dbReference>
<dbReference type="GO" id="GO:0030133">
    <property type="term" value="C:transport vesicle"/>
    <property type="evidence" value="ECO:0007669"/>
    <property type="project" value="UniProtKB-SubCell"/>
</dbReference>
<dbReference type="GO" id="GO:0004252">
    <property type="term" value="F:serine-type endopeptidase activity"/>
    <property type="evidence" value="ECO:0000318"/>
    <property type="project" value="GO_Central"/>
</dbReference>
<dbReference type="GO" id="GO:0016486">
    <property type="term" value="P:peptide hormone processing"/>
    <property type="evidence" value="ECO:0000318"/>
    <property type="project" value="GO_Central"/>
</dbReference>
<dbReference type="CDD" id="cd04059">
    <property type="entry name" value="Peptidases_S8_Protein_convertases_Kexins_Furin-like"/>
    <property type="match status" value="1"/>
</dbReference>
<dbReference type="FunFam" id="6.10.250.3320:FF:000001">
    <property type="entry name" value="neuroendocrine convertase 1"/>
    <property type="match status" value="1"/>
</dbReference>
<dbReference type="FunFam" id="2.60.120.260:FF:000054">
    <property type="entry name" value="Proprotein convertase subtilisin/kexin type 1"/>
    <property type="match status" value="1"/>
</dbReference>
<dbReference type="FunFam" id="3.30.70.850:FF:000001">
    <property type="entry name" value="Proprotein convertase subtilisin/kexin type 5"/>
    <property type="match status" value="1"/>
</dbReference>
<dbReference type="FunFam" id="3.40.50.200:FF:000010">
    <property type="entry name" value="Putative neuroendocrine convertase 1"/>
    <property type="match status" value="1"/>
</dbReference>
<dbReference type="Gene3D" id="6.10.250.3320">
    <property type="match status" value="1"/>
</dbReference>
<dbReference type="Gene3D" id="2.60.120.260">
    <property type="entry name" value="Galactose-binding domain-like"/>
    <property type="match status" value="1"/>
</dbReference>
<dbReference type="Gene3D" id="3.30.70.850">
    <property type="entry name" value="Peptidase S8, pro-domain"/>
    <property type="match status" value="1"/>
</dbReference>
<dbReference type="Gene3D" id="3.40.50.200">
    <property type="entry name" value="Peptidase S8/S53 domain"/>
    <property type="match status" value="1"/>
</dbReference>
<dbReference type="InterPro" id="IPR008979">
    <property type="entry name" value="Galactose-bd-like_sf"/>
</dbReference>
<dbReference type="InterPro" id="IPR034182">
    <property type="entry name" value="Kexin/furin"/>
</dbReference>
<dbReference type="InterPro" id="IPR002884">
    <property type="entry name" value="P_dom"/>
</dbReference>
<dbReference type="InterPro" id="IPR000209">
    <property type="entry name" value="Peptidase_S8/S53_dom"/>
</dbReference>
<dbReference type="InterPro" id="IPR036852">
    <property type="entry name" value="Peptidase_S8/S53_dom_sf"/>
</dbReference>
<dbReference type="InterPro" id="IPR023827">
    <property type="entry name" value="Peptidase_S8_Asp-AS"/>
</dbReference>
<dbReference type="InterPro" id="IPR022398">
    <property type="entry name" value="Peptidase_S8_His-AS"/>
</dbReference>
<dbReference type="InterPro" id="IPR023828">
    <property type="entry name" value="Peptidase_S8_Ser-AS"/>
</dbReference>
<dbReference type="InterPro" id="IPR015500">
    <property type="entry name" value="Peptidase_S8_subtilisin-rel"/>
</dbReference>
<dbReference type="InterPro" id="IPR022005">
    <property type="entry name" value="Proho_convert"/>
</dbReference>
<dbReference type="InterPro" id="IPR032815">
    <property type="entry name" value="S8_pro-domain"/>
</dbReference>
<dbReference type="InterPro" id="IPR038466">
    <property type="entry name" value="S8_pro-domain_sf"/>
</dbReference>
<dbReference type="PANTHER" id="PTHR42884:SF14">
    <property type="entry name" value="NEUROENDOCRINE CONVERTASE 1"/>
    <property type="match status" value="1"/>
</dbReference>
<dbReference type="PANTHER" id="PTHR42884">
    <property type="entry name" value="PROPROTEIN CONVERTASE SUBTILISIN/KEXIN-RELATED"/>
    <property type="match status" value="1"/>
</dbReference>
<dbReference type="Pfam" id="PF01483">
    <property type="entry name" value="P_proprotein"/>
    <property type="match status" value="1"/>
</dbReference>
<dbReference type="Pfam" id="PF00082">
    <property type="entry name" value="Peptidase_S8"/>
    <property type="match status" value="1"/>
</dbReference>
<dbReference type="Pfam" id="PF12177">
    <property type="entry name" value="Proho_convert"/>
    <property type="match status" value="1"/>
</dbReference>
<dbReference type="Pfam" id="PF16470">
    <property type="entry name" value="S8_pro-domain"/>
    <property type="match status" value="1"/>
</dbReference>
<dbReference type="PRINTS" id="PR00723">
    <property type="entry name" value="SUBTILISIN"/>
</dbReference>
<dbReference type="SUPFAM" id="SSF49785">
    <property type="entry name" value="Galactose-binding domain-like"/>
    <property type="match status" value="1"/>
</dbReference>
<dbReference type="SUPFAM" id="SSF54897">
    <property type="entry name" value="Protease propeptides/inhibitors"/>
    <property type="match status" value="1"/>
</dbReference>
<dbReference type="SUPFAM" id="SSF52743">
    <property type="entry name" value="Subtilisin-like"/>
    <property type="match status" value="1"/>
</dbReference>
<dbReference type="PROSITE" id="PS51829">
    <property type="entry name" value="P_HOMO_B"/>
    <property type="match status" value="1"/>
</dbReference>
<dbReference type="PROSITE" id="PS51892">
    <property type="entry name" value="SUBTILASE"/>
    <property type="match status" value="1"/>
</dbReference>
<dbReference type="PROSITE" id="PS00136">
    <property type="entry name" value="SUBTILASE_ASP"/>
    <property type="match status" value="1"/>
</dbReference>
<dbReference type="PROSITE" id="PS00137">
    <property type="entry name" value="SUBTILASE_HIS"/>
    <property type="match status" value="1"/>
</dbReference>
<dbReference type="PROSITE" id="PS00138">
    <property type="entry name" value="SUBTILASE_SER"/>
    <property type="match status" value="1"/>
</dbReference>
<sequence length="753" mass="83807">MGRRAWTLQCTAFSLFCAWCAMNSVKAKKQFVNEWAAEIPGGPEAASAIAQELGYDLLGQIGSLENHYLFKHRNHPRRSRRSALHITKRLSDDDRVIWAEQQYEKERSKRSVLRDSALDLFNDPMWNQQWYLQDTRMTATLPKLDLHVIPVWQKGITGKGVVITVLDDGLEWNHTDIYANYDPEASYDFNDNDHDPFPRYDLINENKHGTRCAGEIAMQANNHKCGVGVAYNSKVGGIRMLDGIVTDAIEASLIGFNPGHVDIYSASWGPNDDGKTVEGPGRLAQKAFEYGVKQGRQGKGSIFVWASGNGGRQGDNCDCDGYTDSIYTISINSASQQGLSPWYAEKCSSTLATSYSSGDYTDQRITSADLHNDCTETHTGTSASAPLAAGIFALALEANPNLTWRDMQHLVVWTSEYDPLANNPGWKKNGAGLMVNSRFGFGLLNAKALVDLADPSTWSSVPEKKECVVKDNDFEPRALKANGEVIIEIPTRACEGQENAIKSLEHVQFEATIEYSRRGDLHVTLTSAAGTSTVLLAERERDTSPNGFKNWDFMSVHTWGENPIGTWTLRIADMSGRIQNEGRIVTWKLILHGTSSQPEHMKQPRVYTSYNTVQNDRRGVEKVVDSGEEQPTQEGLDENAQASQSPSGSGVGGRRDELAEGAPSEAMLRLLQSAFSKNSPSKQSPKKPPSAKPNIPYENFYEALERLNKPSQLKDSEDSLYNDYVDGFYNTKPYKHRDDRLLQALVDLLREEN</sequence>
<proteinExistence type="evidence at transcript level"/>
<reference key="1">
    <citation type="journal article" date="2000" name="DNA Cell Biol.">
        <title>Molecular cloning demonstrates structural features of homologous bovine prohormone convertases 1 and 2.</title>
        <authorList>
            <person name="Hwang S.-R."/>
            <person name="Ng S.-M."/>
            <person name="Steineckert B."/>
            <person name="Seidah N.G."/>
            <person name="Hook V.Y.H."/>
        </authorList>
    </citation>
    <scope>NUCLEOTIDE SEQUENCE [MRNA]</scope>
    <source>
        <tissue>Adrenal medulla</tissue>
    </source>
</reference>
<feature type="signal peptide" evidence="3">
    <location>
        <begin position="1"/>
        <end position="27"/>
    </location>
</feature>
<feature type="propeptide" id="PRO_0000244606" evidence="3">
    <location>
        <begin position="28"/>
        <end position="110"/>
    </location>
</feature>
<feature type="chain" id="PRO_0000244607" description="Neuroendocrine convertase 1">
    <location>
        <begin position="111"/>
        <end position="753"/>
    </location>
</feature>
<feature type="domain" description="Peptidase S8" evidence="5">
    <location>
        <begin position="129"/>
        <end position="450"/>
    </location>
</feature>
<feature type="domain" description="P/Homo B" evidence="4">
    <location>
        <begin position="460"/>
        <end position="597"/>
    </location>
</feature>
<feature type="region of interest" description="Disordered" evidence="6">
    <location>
        <begin position="617"/>
        <end position="657"/>
    </location>
</feature>
<feature type="region of interest" description="Disordered" evidence="6">
    <location>
        <begin position="676"/>
        <end position="695"/>
    </location>
</feature>
<feature type="active site" description="Charge relay system" evidence="5">
    <location>
        <position position="167"/>
    </location>
</feature>
<feature type="active site" description="Charge relay system" evidence="5">
    <location>
        <position position="208"/>
    </location>
</feature>
<feature type="active site" description="Charge relay system" evidence="5">
    <location>
        <position position="382"/>
    </location>
</feature>
<feature type="glycosylation site" description="N-linked (GlcNAc...) asparagine" evidence="3">
    <location>
        <position position="173"/>
    </location>
</feature>
<feature type="glycosylation site" description="N-linked (GlcNAc...) asparagine" evidence="3">
    <location>
        <position position="401"/>
    </location>
</feature>
<feature type="disulfide bond" evidence="1">
    <location>
        <begin position="225"/>
        <end position="374"/>
    </location>
</feature>
<feature type="disulfide bond" evidence="1">
    <location>
        <begin position="317"/>
        <end position="347"/>
    </location>
</feature>
<feature type="disulfide bond" evidence="1">
    <location>
        <begin position="467"/>
        <end position="494"/>
    </location>
</feature>
<accession>Q9GLR1</accession>